<evidence type="ECO:0000250" key="1"/>
<evidence type="ECO:0000255" key="2"/>
<evidence type="ECO:0000305" key="3"/>
<gene>
    <name type="ordered locus">At5g20640</name>
    <name type="ORF">T1M15.40</name>
</gene>
<feature type="initiator methionine" description="Removed" evidence="2">
    <location>
        <position position="1"/>
    </location>
</feature>
<feature type="chain" id="PRO_0000399247" description="Protein LURP-one-related 16">
    <location>
        <begin position="2"/>
        <end position="215"/>
    </location>
</feature>
<feature type="lipid moiety-binding region" description="N-myristoyl glycine" evidence="2">
    <location>
        <position position="2"/>
    </location>
</feature>
<accession>A0MFH4</accession>
<accession>Q3E992</accession>
<keyword id="KW-0449">Lipoprotein</keyword>
<keyword id="KW-0519">Myristate</keyword>
<keyword id="KW-1185">Reference proteome</keyword>
<name>LOR16_ARATH</name>
<sequence>MGARSSQTVDPVLSRRYSSESETVLVVRRRPPMVNGGGFVVSNSKQVVVFRVDGCGVLGTKGKLLLRNGDGNDLLLIRKMGGIVQALNMVHNKWEGFGYDNEGTERLVFTLKDPKDSCLVQNSSIKILVHGKPPKISSTRNNYVEIKGSFAERACNIMDSDGKAIAKVRIEKEMEEMVGNKKDLYHVIVKPNVDQSFIVGLIAILDYIHGESTIC</sequence>
<reference key="1">
    <citation type="journal article" date="2000" name="Nature">
        <title>Sequence and analysis of chromosome 5 of the plant Arabidopsis thaliana.</title>
        <authorList>
            <person name="Tabata S."/>
            <person name="Kaneko T."/>
            <person name="Nakamura Y."/>
            <person name="Kotani H."/>
            <person name="Kato T."/>
            <person name="Asamizu E."/>
            <person name="Miyajima N."/>
            <person name="Sasamoto S."/>
            <person name="Kimura T."/>
            <person name="Hosouchi T."/>
            <person name="Kawashima K."/>
            <person name="Kohara M."/>
            <person name="Matsumoto M."/>
            <person name="Matsuno A."/>
            <person name="Muraki A."/>
            <person name="Nakayama S."/>
            <person name="Nakazaki N."/>
            <person name="Naruo K."/>
            <person name="Okumura S."/>
            <person name="Shinpo S."/>
            <person name="Takeuchi C."/>
            <person name="Wada T."/>
            <person name="Watanabe A."/>
            <person name="Yamada M."/>
            <person name="Yasuda M."/>
            <person name="Sato S."/>
            <person name="de la Bastide M."/>
            <person name="Huang E."/>
            <person name="Spiegel L."/>
            <person name="Gnoj L."/>
            <person name="O'Shaughnessy A."/>
            <person name="Preston R."/>
            <person name="Habermann K."/>
            <person name="Murray J."/>
            <person name="Johnson D."/>
            <person name="Rohlfing T."/>
            <person name="Nelson J."/>
            <person name="Stoneking T."/>
            <person name="Pepin K."/>
            <person name="Spieth J."/>
            <person name="Sekhon M."/>
            <person name="Armstrong J."/>
            <person name="Becker M."/>
            <person name="Belter E."/>
            <person name="Cordum H."/>
            <person name="Cordes M."/>
            <person name="Courtney L."/>
            <person name="Courtney W."/>
            <person name="Dante M."/>
            <person name="Du H."/>
            <person name="Edwards J."/>
            <person name="Fryman J."/>
            <person name="Haakensen B."/>
            <person name="Lamar E."/>
            <person name="Latreille P."/>
            <person name="Leonard S."/>
            <person name="Meyer R."/>
            <person name="Mulvaney E."/>
            <person name="Ozersky P."/>
            <person name="Riley A."/>
            <person name="Strowmatt C."/>
            <person name="Wagner-McPherson C."/>
            <person name="Wollam A."/>
            <person name="Yoakum M."/>
            <person name="Bell M."/>
            <person name="Dedhia N."/>
            <person name="Parnell L."/>
            <person name="Shah R."/>
            <person name="Rodriguez M."/>
            <person name="Hoon See L."/>
            <person name="Vil D."/>
            <person name="Baker J."/>
            <person name="Kirchoff K."/>
            <person name="Toth K."/>
            <person name="King L."/>
            <person name="Bahret A."/>
            <person name="Miller B."/>
            <person name="Marra M.A."/>
            <person name="Martienssen R."/>
            <person name="McCombie W.R."/>
            <person name="Wilson R.K."/>
            <person name="Murphy G."/>
            <person name="Bancroft I."/>
            <person name="Volckaert G."/>
            <person name="Wambutt R."/>
            <person name="Duesterhoeft A."/>
            <person name="Stiekema W."/>
            <person name="Pohl T."/>
            <person name="Entian K.-D."/>
            <person name="Terryn N."/>
            <person name="Hartley N."/>
            <person name="Bent E."/>
            <person name="Johnson S."/>
            <person name="Langham S.-A."/>
            <person name="McCullagh B."/>
            <person name="Robben J."/>
            <person name="Grymonprez B."/>
            <person name="Zimmermann W."/>
            <person name="Ramsperger U."/>
            <person name="Wedler H."/>
            <person name="Balke K."/>
            <person name="Wedler E."/>
            <person name="Peters S."/>
            <person name="van Staveren M."/>
            <person name="Dirkse W."/>
            <person name="Mooijman P."/>
            <person name="Klein Lankhorst R."/>
            <person name="Weitzenegger T."/>
            <person name="Bothe G."/>
            <person name="Rose M."/>
            <person name="Hauf J."/>
            <person name="Berneiser S."/>
            <person name="Hempel S."/>
            <person name="Feldpausch M."/>
            <person name="Lamberth S."/>
            <person name="Villarroel R."/>
            <person name="Gielen J."/>
            <person name="Ardiles W."/>
            <person name="Bents O."/>
            <person name="Lemcke K."/>
            <person name="Kolesov G."/>
            <person name="Mayer K.F.X."/>
            <person name="Rudd S."/>
            <person name="Schoof H."/>
            <person name="Schueller C."/>
            <person name="Zaccaria P."/>
            <person name="Mewes H.-W."/>
            <person name="Bevan M."/>
            <person name="Fransz P.F."/>
        </authorList>
    </citation>
    <scope>NUCLEOTIDE SEQUENCE [LARGE SCALE GENOMIC DNA]</scope>
    <source>
        <strain>cv. Columbia</strain>
    </source>
</reference>
<reference key="2">
    <citation type="journal article" date="2017" name="Plant J.">
        <title>Araport11: a complete reannotation of the Arabidopsis thaliana reference genome.</title>
        <authorList>
            <person name="Cheng C.Y."/>
            <person name="Krishnakumar V."/>
            <person name="Chan A.P."/>
            <person name="Thibaud-Nissen F."/>
            <person name="Schobel S."/>
            <person name="Town C.D."/>
        </authorList>
    </citation>
    <scope>GENOME REANNOTATION</scope>
    <source>
        <strain>cv. Columbia</strain>
    </source>
</reference>
<reference key="3">
    <citation type="journal article" date="2006" name="Plant Biotechnol. J.">
        <title>Simultaneous high-throughput recombinational cloning of open reading frames in closed and open configurations.</title>
        <authorList>
            <person name="Underwood B.A."/>
            <person name="Vanderhaeghen R."/>
            <person name="Whitford R."/>
            <person name="Town C.D."/>
            <person name="Hilson P."/>
        </authorList>
    </citation>
    <scope>NUCLEOTIDE SEQUENCE [LARGE SCALE MRNA]</scope>
    <source>
        <strain>cv. Columbia</strain>
    </source>
</reference>
<protein>
    <recommendedName>
        <fullName>Protein LURP-one-related 16</fullName>
    </recommendedName>
</protein>
<organism>
    <name type="scientific">Arabidopsis thaliana</name>
    <name type="common">Mouse-ear cress</name>
    <dbReference type="NCBI Taxonomy" id="3702"/>
    <lineage>
        <taxon>Eukaryota</taxon>
        <taxon>Viridiplantae</taxon>
        <taxon>Streptophyta</taxon>
        <taxon>Embryophyta</taxon>
        <taxon>Tracheophyta</taxon>
        <taxon>Spermatophyta</taxon>
        <taxon>Magnoliopsida</taxon>
        <taxon>eudicotyledons</taxon>
        <taxon>Gunneridae</taxon>
        <taxon>Pentapetalae</taxon>
        <taxon>rosids</taxon>
        <taxon>malvids</taxon>
        <taxon>Brassicales</taxon>
        <taxon>Brassicaceae</taxon>
        <taxon>Camelineae</taxon>
        <taxon>Arabidopsis</taxon>
    </lineage>
</organism>
<dbReference type="EMBL" id="AF296832">
    <property type="status" value="NOT_ANNOTATED_CDS"/>
    <property type="molecule type" value="Genomic_DNA"/>
</dbReference>
<dbReference type="EMBL" id="CP002688">
    <property type="protein sequence ID" value="AED92870.1"/>
    <property type="molecule type" value="Genomic_DNA"/>
</dbReference>
<dbReference type="EMBL" id="DQ446973">
    <property type="protein sequence ID" value="ABE66172.1"/>
    <property type="molecule type" value="mRNA"/>
</dbReference>
<dbReference type="EMBL" id="DQ653300">
    <property type="protein sequence ID" value="ABK28708.1"/>
    <property type="status" value="ALT_SEQ"/>
    <property type="molecule type" value="mRNA"/>
</dbReference>
<dbReference type="RefSeq" id="NP_197564.1">
    <property type="nucleotide sequence ID" value="NM_122071.2"/>
</dbReference>
<dbReference type="SMR" id="A0MFH4"/>
<dbReference type="STRING" id="3702.A0MFH4"/>
<dbReference type="iPTMnet" id="A0MFH4"/>
<dbReference type="PaxDb" id="3702-AT5G20640.1"/>
<dbReference type="EnsemblPlants" id="AT5G20640.1">
    <property type="protein sequence ID" value="AT5G20640.1"/>
    <property type="gene ID" value="AT5G20640"/>
</dbReference>
<dbReference type="GeneID" id="832187"/>
<dbReference type="Gramene" id="AT5G20640.1">
    <property type="protein sequence ID" value="AT5G20640.1"/>
    <property type="gene ID" value="AT5G20640"/>
</dbReference>
<dbReference type="KEGG" id="ath:AT5G20640"/>
<dbReference type="Araport" id="AT5G20640"/>
<dbReference type="TAIR" id="AT5G20640"/>
<dbReference type="eggNOG" id="ENOG502QSUY">
    <property type="taxonomic scope" value="Eukaryota"/>
</dbReference>
<dbReference type="HOGENOM" id="CLU_116956_0_0_1"/>
<dbReference type="InParanoid" id="A0MFH4"/>
<dbReference type="OMA" id="HGESTSC"/>
<dbReference type="PhylomeDB" id="A0MFH4"/>
<dbReference type="PRO" id="PR:A0MFH4"/>
<dbReference type="Proteomes" id="UP000006548">
    <property type="component" value="Chromosome 5"/>
</dbReference>
<dbReference type="ExpressionAtlas" id="A0MFH4">
    <property type="expression patterns" value="baseline and differential"/>
</dbReference>
<dbReference type="Gene3D" id="2.40.160.200">
    <property type="entry name" value="LURP1-related"/>
    <property type="match status" value="1"/>
</dbReference>
<dbReference type="InterPro" id="IPR007612">
    <property type="entry name" value="LOR"/>
</dbReference>
<dbReference type="InterPro" id="IPR038595">
    <property type="entry name" value="LOR_sf"/>
</dbReference>
<dbReference type="InterPro" id="IPR025659">
    <property type="entry name" value="Tubby-like_C"/>
</dbReference>
<dbReference type="PANTHER" id="PTHR31087">
    <property type="match status" value="1"/>
</dbReference>
<dbReference type="PANTHER" id="PTHR31087:SF150">
    <property type="entry name" value="PROTEIN LURP-ONE-RELATED 16"/>
    <property type="match status" value="1"/>
</dbReference>
<dbReference type="Pfam" id="PF04525">
    <property type="entry name" value="LOR"/>
    <property type="match status" value="1"/>
</dbReference>
<dbReference type="SUPFAM" id="SSF54518">
    <property type="entry name" value="Tubby C-terminal domain-like"/>
    <property type="match status" value="1"/>
</dbReference>
<comment type="function">
    <text evidence="1">Might be related to the phospholipid scramblase and tubby-like superfamily of membrane tethered transcription factors.</text>
</comment>
<comment type="similarity">
    <text evidence="3">Belongs to the LOR family.</text>
</comment>
<comment type="sequence caution" evidence="3">
    <conflict type="erroneous termination">
        <sequence resource="EMBL-CDS" id="ABK28708"/>
    </conflict>
    <text>Extended C-terminus.</text>
</comment>
<proteinExistence type="evidence at transcript level"/>